<gene>
    <name evidence="1" type="primary">tsf</name>
    <name type="ordered locus">bll4860</name>
</gene>
<comment type="function">
    <text evidence="1">Associates with the EF-Tu.GDP complex and induces the exchange of GDP to GTP. It remains bound to the aminoacyl-tRNA.EF-Tu.GTP complex up to the GTP hydrolysis stage on the ribosome.</text>
</comment>
<comment type="subcellular location">
    <subcellularLocation>
        <location evidence="1">Cytoplasm</location>
    </subcellularLocation>
</comment>
<comment type="similarity">
    <text evidence="1">Belongs to the EF-Ts family.</text>
</comment>
<keyword id="KW-0963">Cytoplasm</keyword>
<keyword id="KW-0251">Elongation factor</keyword>
<keyword id="KW-0648">Protein biosynthesis</keyword>
<keyword id="KW-1185">Reference proteome</keyword>
<sequence length="307" mass="32081">MATITAAMVKDLRESTGAGMMDCKAALTENDGNMEAAQDWLRKKGLSKAAKKSGRVAAEGLIGALTKGTKGVVVEVNSETDFVARNGQFQGLVKMIAQVAFDVGADVEKIKAAKVGDVTIETAINDAIATIGENMTLRRAASLEVSQGVVSHYVHGAVIDGAGKMGVIVALESPGKADELAALGRQIAMHVAAANPLALDPSGLDPAVVKREKDVLADKYRQQGKPENVIEKIVESGLKTYYKEVCLLEQAFIHDTGKSVAQAVKEAEGKVGGAVKIAGFVRYALGEGIEKQESDFAAEVAAASGKK</sequence>
<dbReference type="EMBL" id="BA000040">
    <property type="protein sequence ID" value="BAC50125.1"/>
    <property type="molecule type" value="Genomic_DNA"/>
</dbReference>
<dbReference type="RefSeq" id="NP_771500.1">
    <property type="nucleotide sequence ID" value="NC_004463.1"/>
</dbReference>
<dbReference type="RefSeq" id="WP_011087628.1">
    <property type="nucleotide sequence ID" value="NC_004463.1"/>
</dbReference>
<dbReference type="SMR" id="Q89KP4"/>
<dbReference type="FunCoup" id="Q89KP4">
    <property type="interactions" value="687"/>
</dbReference>
<dbReference type="STRING" id="224911.AAV28_21610"/>
<dbReference type="EnsemblBacteria" id="BAC50125">
    <property type="protein sequence ID" value="BAC50125"/>
    <property type="gene ID" value="BAC50125"/>
</dbReference>
<dbReference type="GeneID" id="46491863"/>
<dbReference type="KEGG" id="bja:bll4860"/>
<dbReference type="PATRIC" id="fig|224911.44.peg.4705"/>
<dbReference type="eggNOG" id="COG0264">
    <property type="taxonomic scope" value="Bacteria"/>
</dbReference>
<dbReference type="HOGENOM" id="CLU_047155_2_0_5"/>
<dbReference type="InParanoid" id="Q89KP4"/>
<dbReference type="OrthoDB" id="9808348at2"/>
<dbReference type="PhylomeDB" id="Q89KP4"/>
<dbReference type="Proteomes" id="UP000002526">
    <property type="component" value="Chromosome"/>
</dbReference>
<dbReference type="GO" id="GO:0005737">
    <property type="term" value="C:cytoplasm"/>
    <property type="evidence" value="ECO:0007669"/>
    <property type="project" value="UniProtKB-SubCell"/>
</dbReference>
<dbReference type="GO" id="GO:0003746">
    <property type="term" value="F:translation elongation factor activity"/>
    <property type="evidence" value="ECO:0000318"/>
    <property type="project" value="GO_Central"/>
</dbReference>
<dbReference type="GO" id="GO:0006414">
    <property type="term" value="P:translational elongation"/>
    <property type="evidence" value="ECO:0000318"/>
    <property type="project" value="GO_Central"/>
</dbReference>
<dbReference type="CDD" id="cd14275">
    <property type="entry name" value="UBA_EF-Ts"/>
    <property type="match status" value="1"/>
</dbReference>
<dbReference type="FunFam" id="1.10.286.20:FF:000001">
    <property type="entry name" value="Elongation factor Ts"/>
    <property type="match status" value="1"/>
</dbReference>
<dbReference type="FunFam" id="1.10.8.10:FF:000001">
    <property type="entry name" value="Elongation factor Ts"/>
    <property type="match status" value="1"/>
</dbReference>
<dbReference type="Gene3D" id="1.10.286.20">
    <property type="match status" value="1"/>
</dbReference>
<dbReference type="Gene3D" id="1.10.8.10">
    <property type="entry name" value="DNA helicase RuvA subunit, C-terminal domain"/>
    <property type="match status" value="1"/>
</dbReference>
<dbReference type="Gene3D" id="3.30.479.20">
    <property type="entry name" value="Elongation factor Ts, dimerisation domain"/>
    <property type="match status" value="2"/>
</dbReference>
<dbReference type="HAMAP" id="MF_00050">
    <property type="entry name" value="EF_Ts"/>
    <property type="match status" value="1"/>
</dbReference>
<dbReference type="InterPro" id="IPR036402">
    <property type="entry name" value="EF-Ts_dimer_sf"/>
</dbReference>
<dbReference type="InterPro" id="IPR001816">
    <property type="entry name" value="Transl_elong_EFTs/EF1B"/>
</dbReference>
<dbReference type="InterPro" id="IPR014039">
    <property type="entry name" value="Transl_elong_EFTs/EF1B_dimer"/>
</dbReference>
<dbReference type="InterPro" id="IPR018101">
    <property type="entry name" value="Transl_elong_Ts_CS"/>
</dbReference>
<dbReference type="InterPro" id="IPR009060">
    <property type="entry name" value="UBA-like_sf"/>
</dbReference>
<dbReference type="NCBIfam" id="TIGR00116">
    <property type="entry name" value="tsf"/>
    <property type="match status" value="1"/>
</dbReference>
<dbReference type="PANTHER" id="PTHR11741">
    <property type="entry name" value="ELONGATION FACTOR TS"/>
    <property type="match status" value="1"/>
</dbReference>
<dbReference type="PANTHER" id="PTHR11741:SF0">
    <property type="entry name" value="ELONGATION FACTOR TS, MITOCHONDRIAL"/>
    <property type="match status" value="1"/>
</dbReference>
<dbReference type="Pfam" id="PF00889">
    <property type="entry name" value="EF_TS"/>
    <property type="match status" value="1"/>
</dbReference>
<dbReference type="SUPFAM" id="SSF54713">
    <property type="entry name" value="Elongation factor Ts (EF-Ts), dimerisation domain"/>
    <property type="match status" value="2"/>
</dbReference>
<dbReference type="SUPFAM" id="SSF46934">
    <property type="entry name" value="UBA-like"/>
    <property type="match status" value="1"/>
</dbReference>
<dbReference type="PROSITE" id="PS01127">
    <property type="entry name" value="EF_TS_2"/>
    <property type="match status" value="1"/>
</dbReference>
<name>EFTS_BRADU</name>
<reference key="1">
    <citation type="journal article" date="2002" name="DNA Res.">
        <title>Complete genomic sequence of nitrogen-fixing symbiotic bacterium Bradyrhizobium japonicum USDA110.</title>
        <authorList>
            <person name="Kaneko T."/>
            <person name="Nakamura Y."/>
            <person name="Sato S."/>
            <person name="Minamisawa K."/>
            <person name="Uchiumi T."/>
            <person name="Sasamoto S."/>
            <person name="Watanabe A."/>
            <person name="Idesawa K."/>
            <person name="Iriguchi M."/>
            <person name="Kawashima K."/>
            <person name="Kohara M."/>
            <person name="Matsumoto M."/>
            <person name="Shimpo S."/>
            <person name="Tsuruoka H."/>
            <person name="Wada T."/>
            <person name="Yamada M."/>
            <person name="Tabata S."/>
        </authorList>
    </citation>
    <scope>NUCLEOTIDE SEQUENCE [LARGE SCALE GENOMIC DNA]</scope>
    <source>
        <strain>JCM 10833 / BCRC 13528 / IAM 13628 / NBRC 14792 / USDA 110</strain>
    </source>
</reference>
<feature type="chain" id="PRO_0000161089" description="Elongation factor Ts">
    <location>
        <begin position="1"/>
        <end position="307"/>
    </location>
</feature>
<feature type="region of interest" description="Involved in Mg(2+) ion dislocation from EF-Tu" evidence="1">
    <location>
        <begin position="80"/>
        <end position="83"/>
    </location>
</feature>
<proteinExistence type="inferred from homology"/>
<evidence type="ECO:0000255" key="1">
    <source>
        <dbReference type="HAMAP-Rule" id="MF_00050"/>
    </source>
</evidence>
<protein>
    <recommendedName>
        <fullName evidence="1">Elongation factor Ts</fullName>
        <shortName evidence="1">EF-Ts</shortName>
    </recommendedName>
</protein>
<organism>
    <name type="scientific">Bradyrhizobium diazoefficiens (strain JCM 10833 / BCRC 13528 / IAM 13628 / NBRC 14792 / USDA 110)</name>
    <dbReference type="NCBI Taxonomy" id="224911"/>
    <lineage>
        <taxon>Bacteria</taxon>
        <taxon>Pseudomonadati</taxon>
        <taxon>Pseudomonadota</taxon>
        <taxon>Alphaproteobacteria</taxon>
        <taxon>Hyphomicrobiales</taxon>
        <taxon>Nitrobacteraceae</taxon>
        <taxon>Bradyrhizobium</taxon>
    </lineage>
</organism>
<accession>Q89KP4</accession>